<keyword id="KW-0007">Acetylation</keyword>
<keyword id="KW-0903">Direct protein sequencing</keyword>
<keyword id="KW-0349">Heme</keyword>
<keyword id="KW-0408">Iron</keyword>
<keyword id="KW-0479">Metal-binding</keyword>
<keyword id="KW-0561">Oxygen transport</keyword>
<keyword id="KW-0813">Transport</keyword>
<reference evidence="3" key="1">
    <citation type="journal article" date="2004" name="Protein Sci.">
        <title>Structure and function of the Gondwanian hemoglobin of Pseudaphritis urvillii, a primitive notothenioid fish of temperate latitudes.</title>
        <authorList>
            <person name="Verde C."/>
            <person name="Howes B.D."/>
            <person name="De Rosa M.C."/>
            <person name="Raiola L."/>
            <person name="Smulevich G."/>
            <person name="Williams R."/>
            <person name="Giardina B."/>
            <person name="Parisi E."/>
            <person name="Di Prisco G."/>
        </authorList>
    </citation>
    <scope>PROTEIN SEQUENCE</scope>
    <scope>SUBUNIT</scope>
    <scope>ACETYLATION AT SER-1</scope>
    <source>
        <tissue evidence="2">Erythrocyte</tissue>
    </source>
</reference>
<name>HBA_PSEUR</name>
<accession>P83623</accession>
<organism>
    <name type="scientific">Pseudaphritis urvillii</name>
    <name type="common">Congolli</name>
    <name type="synonym">Freshwater flathead</name>
    <dbReference type="NCBI Taxonomy" id="56722"/>
    <lineage>
        <taxon>Eukaryota</taxon>
        <taxon>Metazoa</taxon>
        <taxon>Chordata</taxon>
        <taxon>Craniata</taxon>
        <taxon>Vertebrata</taxon>
        <taxon>Euteleostomi</taxon>
        <taxon>Actinopterygii</taxon>
        <taxon>Neopterygii</taxon>
        <taxon>Teleostei</taxon>
        <taxon>Neoteleostei</taxon>
        <taxon>Acanthomorphata</taxon>
        <taxon>Eupercaria</taxon>
        <taxon>Perciformes</taxon>
        <taxon>Notothenioidei</taxon>
        <taxon>Pseudaphritis</taxon>
    </lineage>
</organism>
<gene>
    <name type="primary">hba</name>
</gene>
<proteinExistence type="evidence at protein level"/>
<sequence>SLTDKDKATVKALWGKISKSADAVGADAVGRMIVVYPQTKTYFSHWPDLAPNSPHVKTHGKTVMTGIALAVSKIDDLTNGLLELSEEHAYKMRVDPANFKILSHCMLVVIATMFPKEFTPEAHVCLDKFLCAVSLALSERYR</sequence>
<feature type="chain" id="PRO_0000052741" description="Hemoglobin subunit alpha">
    <location>
        <begin position="1"/>
        <end position="142"/>
    </location>
</feature>
<feature type="domain" description="Globin" evidence="1">
    <location>
        <begin position="1"/>
        <end position="142"/>
    </location>
</feature>
<feature type="binding site" evidence="1">
    <location>
        <position position="59"/>
    </location>
    <ligand>
        <name>O2</name>
        <dbReference type="ChEBI" id="CHEBI:15379"/>
    </ligand>
</feature>
<feature type="binding site" description="proximal binding residue" evidence="1">
    <location>
        <position position="88"/>
    </location>
    <ligand>
        <name>heme b</name>
        <dbReference type="ChEBI" id="CHEBI:60344"/>
    </ligand>
    <ligandPart>
        <name>Fe</name>
        <dbReference type="ChEBI" id="CHEBI:18248"/>
    </ligandPart>
</feature>
<feature type="modified residue" description="N-acetylserine" evidence="2">
    <location>
        <position position="1"/>
    </location>
</feature>
<dbReference type="SMR" id="P83623"/>
<dbReference type="iPTMnet" id="P83623"/>
<dbReference type="GO" id="GO:0072562">
    <property type="term" value="C:blood microparticle"/>
    <property type="evidence" value="ECO:0007669"/>
    <property type="project" value="TreeGrafter"/>
</dbReference>
<dbReference type="GO" id="GO:0031838">
    <property type="term" value="C:haptoglobin-hemoglobin complex"/>
    <property type="evidence" value="ECO:0007669"/>
    <property type="project" value="TreeGrafter"/>
</dbReference>
<dbReference type="GO" id="GO:0005833">
    <property type="term" value="C:hemoglobin complex"/>
    <property type="evidence" value="ECO:0000314"/>
    <property type="project" value="UniProtKB"/>
</dbReference>
<dbReference type="GO" id="GO:0031720">
    <property type="term" value="F:haptoglobin binding"/>
    <property type="evidence" value="ECO:0007669"/>
    <property type="project" value="TreeGrafter"/>
</dbReference>
<dbReference type="GO" id="GO:0020037">
    <property type="term" value="F:heme binding"/>
    <property type="evidence" value="ECO:0007669"/>
    <property type="project" value="InterPro"/>
</dbReference>
<dbReference type="GO" id="GO:0005506">
    <property type="term" value="F:iron ion binding"/>
    <property type="evidence" value="ECO:0007669"/>
    <property type="project" value="InterPro"/>
</dbReference>
<dbReference type="GO" id="GO:0043177">
    <property type="term" value="F:organic acid binding"/>
    <property type="evidence" value="ECO:0007669"/>
    <property type="project" value="TreeGrafter"/>
</dbReference>
<dbReference type="GO" id="GO:0019825">
    <property type="term" value="F:oxygen binding"/>
    <property type="evidence" value="ECO:0007669"/>
    <property type="project" value="InterPro"/>
</dbReference>
<dbReference type="GO" id="GO:0005344">
    <property type="term" value="F:oxygen carrier activity"/>
    <property type="evidence" value="ECO:0000314"/>
    <property type="project" value="UniProtKB"/>
</dbReference>
<dbReference type="GO" id="GO:0004601">
    <property type="term" value="F:peroxidase activity"/>
    <property type="evidence" value="ECO:0007669"/>
    <property type="project" value="TreeGrafter"/>
</dbReference>
<dbReference type="GO" id="GO:0042744">
    <property type="term" value="P:hydrogen peroxide catabolic process"/>
    <property type="evidence" value="ECO:0007669"/>
    <property type="project" value="TreeGrafter"/>
</dbReference>
<dbReference type="GO" id="GO:0015671">
    <property type="term" value="P:oxygen transport"/>
    <property type="evidence" value="ECO:0000314"/>
    <property type="project" value="UniProtKB"/>
</dbReference>
<dbReference type="CDD" id="cd08927">
    <property type="entry name" value="Hb-alpha-like"/>
    <property type="match status" value="1"/>
</dbReference>
<dbReference type="FunFam" id="1.10.490.10:FF:000002">
    <property type="entry name" value="Hemoglobin subunit alpha"/>
    <property type="match status" value="1"/>
</dbReference>
<dbReference type="Gene3D" id="1.10.490.10">
    <property type="entry name" value="Globins"/>
    <property type="match status" value="1"/>
</dbReference>
<dbReference type="InterPro" id="IPR000971">
    <property type="entry name" value="Globin"/>
</dbReference>
<dbReference type="InterPro" id="IPR009050">
    <property type="entry name" value="Globin-like_sf"/>
</dbReference>
<dbReference type="InterPro" id="IPR012292">
    <property type="entry name" value="Globin/Proto"/>
</dbReference>
<dbReference type="InterPro" id="IPR002338">
    <property type="entry name" value="Hemoglobin_a-typ"/>
</dbReference>
<dbReference type="InterPro" id="IPR050056">
    <property type="entry name" value="Hemoglobin_oxygen_transport"/>
</dbReference>
<dbReference type="InterPro" id="IPR002339">
    <property type="entry name" value="Hemoglobin_pi"/>
</dbReference>
<dbReference type="PANTHER" id="PTHR11442">
    <property type="entry name" value="HEMOGLOBIN FAMILY MEMBER"/>
    <property type="match status" value="1"/>
</dbReference>
<dbReference type="PANTHER" id="PTHR11442:SF41">
    <property type="entry name" value="HEMOGLOBIN SUBUNIT ZETA"/>
    <property type="match status" value="1"/>
</dbReference>
<dbReference type="Pfam" id="PF00042">
    <property type="entry name" value="Globin"/>
    <property type="match status" value="1"/>
</dbReference>
<dbReference type="PRINTS" id="PR00612">
    <property type="entry name" value="ALPHAHAEM"/>
</dbReference>
<dbReference type="PRINTS" id="PR00815">
    <property type="entry name" value="PIHAEM"/>
</dbReference>
<dbReference type="SUPFAM" id="SSF46458">
    <property type="entry name" value="Globin-like"/>
    <property type="match status" value="1"/>
</dbReference>
<dbReference type="PROSITE" id="PS01033">
    <property type="entry name" value="GLOBIN"/>
    <property type="match status" value="1"/>
</dbReference>
<protein>
    <recommendedName>
        <fullName>Hemoglobin subunit alpha</fullName>
    </recommendedName>
    <alternativeName>
        <fullName>Alpha-globin</fullName>
    </alternativeName>
    <alternativeName>
        <fullName>Hemoglobin alpha chain</fullName>
    </alternativeName>
</protein>
<comment type="function">
    <text>Involved in oxygen transport from gills to the various peripheral tissues.</text>
</comment>
<comment type="subunit">
    <text evidence="2">Hb1 is a heterotetramer of two alpha chains and two beta-1 chains. Hb2 is a heterotetramer of two alpha chains and two beta-2 chains.</text>
</comment>
<comment type="tissue specificity">
    <text evidence="3">Red blood cells.</text>
</comment>
<comment type="similarity">
    <text evidence="1">Belongs to the globin family.</text>
</comment>
<evidence type="ECO:0000255" key="1">
    <source>
        <dbReference type="PROSITE-ProRule" id="PRU00238"/>
    </source>
</evidence>
<evidence type="ECO:0000269" key="2">
    <source>
    </source>
</evidence>
<evidence type="ECO:0000305" key="3"/>